<keyword id="KW-0067">ATP-binding</keyword>
<keyword id="KW-0997">Cell inner membrane</keyword>
<keyword id="KW-1003">Cell membrane</keyword>
<keyword id="KW-0406">Ion transport</keyword>
<keyword id="KW-0472">Membrane</keyword>
<keyword id="KW-0547">Nucleotide-binding</keyword>
<keyword id="KW-1185">Reference proteome</keyword>
<keyword id="KW-1278">Translocase</keyword>
<keyword id="KW-0813">Transport</keyword>
<keyword id="KW-0862">Zinc</keyword>
<keyword id="KW-0864">Zinc transport</keyword>
<dbReference type="EC" id="7.2.2.20" evidence="1"/>
<dbReference type="EMBL" id="CP000144">
    <property type="protein sequence ID" value="ABA81169.1"/>
    <property type="molecule type" value="Genomic_DNA"/>
</dbReference>
<dbReference type="RefSeq" id="WP_011339418.1">
    <property type="nucleotide sequence ID" value="NZ_CP030272.1"/>
</dbReference>
<dbReference type="RefSeq" id="YP_355070.1">
    <property type="nucleotide sequence ID" value="NC_007494.2"/>
</dbReference>
<dbReference type="SMR" id="Q3IWB5"/>
<dbReference type="STRING" id="272943.RSP_3568"/>
<dbReference type="EnsemblBacteria" id="ABA81169">
    <property type="protein sequence ID" value="ABA81169"/>
    <property type="gene ID" value="RSP_3568"/>
</dbReference>
<dbReference type="GeneID" id="3721992"/>
<dbReference type="KEGG" id="rsp:RSP_3568"/>
<dbReference type="PATRIC" id="fig|272943.9.peg.4005"/>
<dbReference type="eggNOG" id="COG1121">
    <property type="taxonomic scope" value="Bacteria"/>
</dbReference>
<dbReference type="OrthoDB" id="9806726at2"/>
<dbReference type="PhylomeDB" id="Q3IWB5"/>
<dbReference type="Proteomes" id="UP000002703">
    <property type="component" value="Chromosome 2"/>
</dbReference>
<dbReference type="GO" id="GO:0005886">
    <property type="term" value="C:plasma membrane"/>
    <property type="evidence" value="ECO:0007669"/>
    <property type="project" value="UniProtKB-SubCell"/>
</dbReference>
<dbReference type="GO" id="GO:0015633">
    <property type="term" value="F:ABC-type zinc transporter activity"/>
    <property type="evidence" value="ECO:0007669"/>
    <property type="project" value="UniProtKB-EC"/>
</dbReference>
<dbReference type="GO" id="GO:0005524">
    <property type="term" value="F:ATP binding"/>
    <property type="evidence" value="ECO:0007669"/>
    <property type="project" value="UniProtKB-KW"/>
</dbReference>
<dbReference type="GO" id="GO:0016887">
    <property type="term" value="F:ATP hydrolysis activity"/>
    <property type="evidence" value="ECO:0007669"/>
    <property type="project" value="InterPro"/>
</dbReference>
<dbReference type="GO" id="GO:0010043">
    <property type="term" value="P:response to zinc ion"/>
    <property type="evidence" value="ECO:0007669"/>
    <property type="project" value="TreeGrafter"/>
</dbReference>
<dbReference type="CDD" id="cd03235">
    <property type="entry name" value="ABC_Metallic_Cations"/>
    <property type="match status" value="1"/>
</dbReference>
<dbReference type="Gene3D" id="3.40.50.300">
    <property type="entry name" value="P-loop containing nucleotide triphosphate hydrolases"/>
    <property type="match status" value="1"/>
</dbReference>
<dbReference type="InterPro" id="IPR003593">
    <property type="entry name" value="AAA+_ATPase"/>
</dbReference>
<dbReference type="InterPro" id="IPR003439">
    <property type="entry name" value="ABC_transporter-like_ATP-bd"/>
</dbReference>
<dbReference type="InterPro" id="IPR017871">
    <property type="entry name" value="ABC_transporter-like_CS"/>
</dbReference>
<dbReference type="InterPro" id="IPR050153">
    <property type="entry name" value="Metal_Ion_Import_ABC"/>
</dbReference>
<dbReference type="InterPro" id="IPR027417">
    <property type="entry name" value="P-loop_NTPase"/>
</dbReference>
<dbReference type="PANTHER" id="PTHR42734">
    <property type="entry name" value="METAL TRANSPORT SYSTEM ATP-BINDING PROTEIN TM_0124-RELATED"/>
    <property type="match status" value="1"/>
</dbReference>
<dbReference type="PANTHER" id="PTHR42734:SF9">
    <property type="entry name" value="ZINC IMPORT ATP-BINDING PROTEIN ZNUC"/>
    <property type="match status" value="1"/>
</dbReference>
<dbReference type="Pfam" id="PF00005">
    <property type="entry name" value="ABC_tran"/>
    <property type="match status" value="1"/>
</dbReference>
<dbReference type="SMART" id="SM00382">
    <property type="entry name" value="AAA"/>
    <property type="match status" value="1"/>
</dbReference>
<dbReference type="SUPFAM" id="SSF52540">
    <property type="entry name" value="P-loop containing nucleoside triphosphate hydrolases"/>
    <property type="match status" value="1"/>
</dbReference>
<dbReference type="PROSITE" id="PS00211">
    <property type="entry name" value="ABC_TRANSPORTER_1"/>
    <property type="match status" value="1"/>
</dbReference>
<dbReference type="PROSITE" id="PS50893">
    <property type="entry name" value="ABC_TRANSPORTER_2"/>
    <property type="match status" value="1"/>
</dbReference>
<dbReference type="PROSITE" id="PS51298">
    <property type="entry name" value="ZNUC"/>
    <property type="match status" value="1"/>
</dbReference>
<gene>
    <name evidence="1" type="primary">znuC</name>
    <name type="ordered locus">RHOS4_36010</name>
    <name type="ORF">RSP_3568</name>
</gene>
<sequence>MTLIAAHHLAVRRGRDEILSDVSLSVAPREIVTIVGPNGSGKSTLLRALLGILPAAAGRVSRRPGLRIGYVPQRLQVDGTLPLTAARFLSLPRRRAPAEVAAALERVGVPEVADRQLADLSGGQFQRVLLARALLTEPELLMLDEPTQGLDQPGEAAFYRLIEEVRSTTGAAILMVSHDLHVVMAASDRVICLNRHVCCEGTPRVVSNAPEYRALFGHGTQGALALYRHEHDHDHTHDHSHHA</sequence>
<feature type="chain" id="PRO_0000281538" description="Zinc import ATP-binding protein ZnuC">
    <location>
        <begin position="1"/>
        <end position="243"/>
    </location>
</feature>
<feature type="domain" description="ABC transporter" evidence="1">
    <location>
        <begin position="4"/>
        <end position="219"/>
    </location>
</feature>
<feature type="binding site" evidence="1">
    <location>
        <begin position="36"/>
        <end position="43"/>
    </location>
    <ligand>
        <name>ATP</name>
        <dbReference type="ChEBI" id="CHEBI:30616"/>
    </ligand>
</feature>
<protein>
    <recommendedName>
        <fullName evidence="1">Zinc import ATP-binding protein ZnuC</fullName>
        <ecNumber evidence="1">7.2.2.20</ecNumber>
    </recommendedName>
</protein>
<accession>Q3IWB5</accession>
<organism>
    <name type="scientific">Cereibacter sphaeroides (strain ATCC 17023 / DSM 158 / JCM 6121 / CCUG 31486 / LMG 2827 / NBRC 12203 / NCIMB 8253 / ATH 2.4.1.)</name>
    <name type="common">Rhodobacter sphaeroides</name>
    <dbReference type="NCBI Taxonomy" id="272943"/>
    <lineage>
        <taxon>Bacteria</taxon>
        <taxon>Pseudomonadati</taxon>
        <taxon>Pseudomonadota</taxon>
        <taxon>Alphaproteobacteria</taxon>
        <taxon>Rhodobacterales</taxon>
        <taxon>Paracoccaceae</taxon>
        <taxon>Cereibacter</taxon>
    </lineage>
</organism>
<evidence type="ECO:0000255" key="1">
    <source>
        <dbReference type="HAMAP-Rule" id="MF_01725"/>
    </source>
</evidence>
<reference key="1">
    <citation type="submission" date="2005-09" db="EMBL/GenBank/DDBJ databases">
        <title>Complete sequence of chromosome 2 of Rhodobacter sphaeroides 2.4.1.</title>
        <authorList>
            <person name="Copeland A."/>
            <person name="Lucas S."/>
            <person name="Lapidus A."/>
            <person name="Barry K."/>
            <person name="Detter J.C."/>
            <person name="Glavina T."/>
            <person name="Hammon N."/>
            <person name="Israni S."/>
            <person name="Pitluck S."/>
            <person name="Richardson P."/>
            <person name="Mackenzie C."/>
            <person name="Choudhary M."/>
            <person name="Larimer F."/>
            <person name="Hauser L.J."/>
            <person name="Land M."/>
            <person name="Donohue T.J."/>
            <person name="Kaplan S."/>
        </authorList>
    </citation>
    <scope>NUCLEOTIDE SEQUENCE [LARGE SCALE GENOMIC DNA]</scope>
    <source>
        <strain>ATCC 17023 / DSM 158 / JCM 6121 / CCUG 31486 / LMG 2827 / NBRC 12203 / NCIMB 8253 / ATH 2.4.1.</strain>
    </source>
</reference>
<proteinExistence type="inferred from homology"/>
<name>ZNUC_CERS4</name>
<comment type="function">
    <text evidence="1">Part of the ABC transporter complex ZnuABC involved in zinc import. Responsible for energy coupling to the transport system.</text>
</comment>
<comment type="catalytic activity">
    <reaction evidence="1">
        <text>Zn(2+)(out) + ATP(in) + H2O(in) = Zn(2+)(in) + ADP(in) + phosphate(in) + H(+)(in)</text>
        <dbReference type="Rhea" id="RHEA:29795"/>
        <dbReference type="ChEBI" id="CHEBI:15377"/>
        <dbReference type="ChEBI" id="CHEBI:15378"/>
        <dbReference type="ChEBI" id="CHEBI:29105"/>
        <dbReference type="ChEBI" id="CHEBI:30616"/>
        <dbReference type="ChEBI" id="CHEBI:43474"/>
        <dbReference type="ChEBI" id="CHEBI:456216"/>
        <dbReference type="EC" id="7.2.2.20"/>
    </reaction>
</comment>
<comment type="subunit">
    <text evidence="1">The complex is composed of two ATP-binding proteins (ZnuC), two transmembrane proteins (ZnuB) and a solute-binding protein (ZnuA).</text>
</comment>
<comment type="subcellular location">
    <subcellularLocation>
        <location evidence="1">Cell inner membrane</location>
        <topology evidence="1">Peripheral membrane protein</topology>
    </subcellularLocation>
</comment>
<comment type="similarity">
    <text evidence="1">Belongs to the ABC transporter superfamily. Zinc importer (TC 3.A.1.15.5) family.</text>
</comment>